<organism>
    <name type="scientific">Populus trichocarpa</name>
    <name type="common">Western balsam poplar</name>
    <name type="synonym">Populus balsamifera subsp. trichocarpa</name>
    <dbReference type="NCBI Taxonomy" id="3694"/>
    <lineage>
        <taxon>Eukaryota</taxon>
        <taxon>Viridiplantae</taxon>
        <taxon>Streptophyta</taxon>
        <taxon>Embryophyta</taxon>
        <taxon>Tracheophyta</taxon>
        <taxon>Spermatophyta</taxon>
        <taxon>Magnoliopsida</taxon>
        <taxon>eudicotyledons</taxon>
        <taxon>Gunneridae</taxon>
        <taxon>Pentapetalae</taxon>
        <taxon>rosids</taxon>
        <taxon>fabids</taxon>
        <taxon>Malpighiales</taxon>
        <taxon>Salicaceae</taxon>
        <taxon>Saliceae</taxon>
        <taxon>Populus</taxon>
    </lineage>
</organism>
<comment type="function">
    <text evidence="2">Oxidoreductase involved in lignan biosynthesis. Catalyzes the NADPH-dependent reduction of phenylcoumaran benzylic ethers. Converts dehydrodiconiferyl alcohol (DDC) to isodihydrodehydrodiconiferyl alcohol (IDDDC), and dihydrodehydrodiconiferyl alcohol (DDDC) to tetrahydrodehydrodiconiferyl alcohol (TDDC).</text>
</comment>
<comment type="catalytic activity">
    <reaction evidence="2">
        <text>(-)-dehydrodiconiferyl alcohol + NADPH + H(+) = (S)-isodihydrodehydrodiconiferyl alcohol + NADP(+)</text>
        <dbReference type="Rhea" id="RHEA:59440"/>
        <dbReference type="ChEBI" id="CHEBI:15378"/>
        <dbReference type="ChEBI" id="CHEBI:57783"/>
        <dbReference type="ChEBI" id="CHEBI:58349"/>
        <dbReference type="ChEBI" id="CHEBI:70467"/>
        <dbReference type="ChEBI" id="CHEBI:143259"/>
    </reaction>
</comment>
<comment type="catalytic activity">
    <reaction evidence="2">
        <text>(+)-dehydrodiconiferyl alcohol + NADPH + H(+) = (R)-isodihydrodehydrodiconiferyl alcohol + NADP(+)</text>
        <dbReference type="Rhea" id="RHEA:59844"/>
        <dbReference type="ChEBI" id="CHEBI:15378"/>
        <dbReference type="ChEBI" id="CHEBI:57783"/>
        <dbReference type="ChEBI" id="CHEBI:58349"/>
        <dbReference type="ChEBI" id="CHEBI:143256"/>
        <dbReference type="ChEBI" id="CHEBI:143260"/>
    </reaction>
</comment>
<comment type="catalytic activity">
    <reaction evidence="2">
        <text>(2R,3S)-dihydrodehydrodiconiferyl alcohol + NADPH + H(+) = (S)-tetrahydrodehydrodiconiferyl alcohol + NADP(+)</text>
        <dbReference type="Rhea" id="RHEA:59848"/>
        <dbReference type="ChEBI" id="CHEBI:15378"/>
        <dbReference type="ChEBI" id="CHEBI:57783"/>
        <dbReference type="ChEBI" id="CHEBI:58349"/>
        <dbReference type="ChEBI" id="CHEBI:143258"/>
        <dbReference type="ChEBI" id="CHEBI:143262"/>
    </reaction>
</comment>
<comment type="catalytic activity">
    <reaction evidence="2">
        <text>(2S,3R)-dihydrodehydrodiconiferyl alcohol + NADPH + H(+) = (R)-tetrahydrodehydrodiconiferyl alcohol + NADP(+)</text>
        <dbReference type="Rhea" id="RHEA:59852"/>
        <dbReference type="ChEBI" id="CHEBI:15378"/>
        <dbReference type="ChEBI" id="CHEBI:57783"/>
        <dbReference type="ChEBI" id="CHEBI:58349"/>
        <dbReference type="ChEBI" id="CHEBI:143257"/>
        <dbReference type="ChEBI" id="CHEBI:143263"/>
    </reaction>
</comment>
<comment type="similarity">
    <text evidence="4">Belongs to the NmrA-type oxidoreductase family. Isoflavone reductase subfamily.</text>
</comment>
<dbReference type="EC" id="1.23.1.-" evidence="2"/>
<dbReference type="EMBL" id="CM009298">
    <property type="protein sequence ID" value="EEE87743.1"/>
    <property type="molecule type" value="Genomic_DNA"/>
</dbReference>
<dbReference type="EMBL" id="EF146981">
    <property type="protein sequence ID" value="ABK95019.1"/>
    <property type="molecule type" value="mRNA"/>
</dbReference>
<dbReference type="RefSeq" id="XP_002313788.1">
    <property type="nucleotide sequence ID" value="XM_002313752.2"/>
</dbReference>
<dbReference type="SMR" id="B9HRL7"/>
<dbReference type="FunCoup" id="B9HRL7">
    <property type="interactions" value="185"/>
</dbReference>
<dbReference type="GeneID" id="7464022"/>
<dbReference type="KEGG" id="pop:7464022"/>
<dbReference type="eggNOG" id="ENOG502QPMY">
    <property type="taxonomic scope" value="Eukaryota"/>
</dbReference>
<dbReference type="HOGENOM" id="CLU_060833_0_1_1"/>
<dbReference type="InParanoid" id="B9HRL7"/>
<dbReference type="OrthoDB" id="419598at2759"/>
<dbReference type="Proteomes" id="UP000006729">
    <property type="component" value="Chromosome 9"/>
</dbReference>
<dbReference type="ExpressionAtlas" id="B9HRL7">
    <property type="expression patterns" value="baseline and differential"/>
</dbReference>
<dbReference type="GO" id="GO:0050664">
    <property type="term" value="F:oxidoreductase activity, acting on NAD(P)H, oxygen as acceptor"/>
    <property type="evidence" value="ECO:0000314"/>
    <property type="project" value="UniProtKB"/>
</dbReference>
<dbReference type="GO" id="GO:0009807">
    <property type="term" value="P:lignan biosynthetic process"/>
    <property type="evidence" value="ECO:0000314"/>
    <property type="project" value="UniProtKB"/>
</dbReference>
<dbReference type="CDD" id="cd05259">
    <property type="entry name" value="PCBER_SDR_a"/>
    <property type="match status" value="1"/>
</dbReference>
<dbReference type="Gene3D" id="3.40.50.720">
    <property type="entry name" value="NAD(P)-binding Rossmann-like Domain"/>
    <property type="match status" value="1"/>
</dbReference>
<dbReference type="Gene3D" id="3.90.25.10">
    <property type="entry name" value="UDP-galactose 4-epimerase, domain 1"/>
    <property type="match status" value="1"/>
</dbReference>
<dbReference type="InterPro" id="IPR036291">
    <property type="entry name" value="NAD(P)-bd_dom_sf"/>
</dbReference>
<dbReference type="InterPro" id="IPR008030">
    <property type="entry name" value="NmrA-like"/>
</dbReference>
<dbReference type="InterPro" id="IPR050608">
    <property type="entry name" value="NmrA-type/Isoflavone_red_sf"/>
</dbReference>
<dbReference type="InterPro" id="IPR045312">
    <property type="entry name" value="PCBER-like"/>
</dbReference>
<dbReference type="PANTHER" id="PTHR43349:SF35">
    <property type="entry name" value="PHENYLCOUMARAN BENZYLIC ETHER REDUCTASE 1"/>
    <property type="match status" value="1"/>
</dbReference>
<dbReference type="PANTHER" id="PTHR43349">
    <property type="entry name" value="PINORESINOL REDUCTASE-RELATED"/>
    <property type="match status" value="1"/>
</dbReference>
<dbReference type="Pfam" id="PF05368">
    <property type="entry name" value="NmrA"/>
    <property type="match status" value="1"/>
</dbReference>
<dbReference type="SUPFAM" id="SSF51735">
    <property type="entry name" value="NAD(P)-binding Rossmann-fold domains"/>
    <property type="match status" value="1"/>
</dbReference>
<proteinExistence type="evidence at protein level"/>
<feature type="chain" id="PRO_0000442614" description="Phenylcoumaran benzylic ether reductase POP1">
    <location>
        <begin position="1"/>
        <end position="306"/>
    </location>
</feature>
<feature type="active site" description="Proton acceptor" evidence="1">
    <location>
        <position position="131"/>
    </location>
</feature>
<feature type="binding site" evidence="5">
    <location>
        <begin position="9"/>
        <end position="15"/>
    </location>
    <ligand>
        <name>NADP(+)</name>
        <dbReference type="ChEBI" id="CHEBI:58349"/>
    </ligand>
</feature>
<feature type="binding site" evidence="1">
    <location>
        <position position="34"/>
    </location>
    <ligand>
        <name>NADP(+)</name>
        <dbReference type="ChEBI" id="CHEBI:58349"/>
    </ligand>
</feature>
<feature type="binding site" evidence="1">
    <location>
        <position position="43"/>
    </location>
    <ligand>
        <name>NADP(+)</name>
        <dbReference type="ChEBI" id="CHEBI:58349"/>
    </ligand>
</feature>
<feature type="binding site" evidence="1">
    <location>
        <position position="135"/>
    </location>
    <ligand>
        <name>NADP(+)</name>
        <dbReference type="ChEBI" id="CHEBI:58349"/>
    </ligand>
</feature>
<feature type="sequence conflict" description="In Ref. 2; ABK95019." evidence="4" ref="2">
    <original>Y</original>
    <variation>D</variation>
    <location>
        <position position="48"/>
    </location>
</feature>
<protein>
    <recommendedName>
        <fullName evidence="3">Phenylcoumaran benzylic ether reductase POP1</fullName>
        <shortName evidence="3">PCBER-Pop1</shortName>
        <ecNumber evidence="2">1.23.1.-</ecNumber>
    </recommendedName>
</protein>
<evidence type="ECO:0000250" key="1">
    <source>
        <dbReference type="UniProtKB" id="Q9LD14"/>
    </source>
</evidence>
<evidence type="ECO:0000269" key="2">
    <source>
    </source>
</evidence>
<evidence type="ECO:0000303" key="3">
    <source>
    </source>
</evidence>
<evidence type="ECO:0000305" key="4"/>
<evidence type="ECO:0000305" key="5">
    <source>
    </source>
</evidence>
<evidence type="ECO:0000312" key="6">
    <source>
        <dbReference type="EMBL" id="EEE87743.1"/>
    </source>
</evidence>
<accession>B9HRL7</accession>
<accession>A9PF66</accession>
<gene>
    <name evidence="4" type="primary">PCBER</name>
    <name evidence="6" type="ORF">POPTR_0009s12070g</name>
</gene>
<reference key="1">
    <citation type="journal article" date="2006" name="Science">
        <title>The genome of black cottonwood, Populus trichocarpa (Torr. &amp; Gray).</title>
        <authorList>
            <person name="Tuskan G.A."/>
            <person name="Difazio S."/>
            <person name="Jansson S."/>
            <person name="Bohlmann J."/>
            <person name="Grigoriev I."/>
            <person name="Hellsten U."/>
            <person name="Putnam N."/>
            <person name="Ralph S."/>
            <person name="Rombauts S."/>
            <person name="Salamov A."/>
            <person name="Schein J."/>
            <person name="Sterck L."/>
            <person name="Aerts A."/>
            <person name="Bhalerao R.R."/>
            <person name="Bhalerao R.P."/>
            <person name="Blaudez D."/>
            <person name="Boerjan W."/>
            <person name="Brun A."/>
            <person name="Brunner A."/>
            <person name="Busov V."/>
            <person name="Campbell M."/>
            <person name="Carlson J."/>
            <person name="Chalot M."/>
            <person name="Chapman J."/>
            <person name="Chen G.-L."/>
            <person name="Cooper D."/>
            <person name="Coutinho P.M."/>
            <person name="Couturier J."/>
            <person name="Covert S."/>
            <person name="Cronk Q."/>
            <person name="Cunningham R."/>
            <person name="Davis J."/>
            <person name="Degroeve S."/>
            <person name="Dejardin A."/>
            <person name="dePamphilis C.W."/>
            <person name="Detter J."/>
            <person name="Dirks B."/>
            <person name="Dubchak I."/>
            <person name="Duplessis S."/>
            <person name="Ehlting J."/>
            <person name="Ellis B."/>
            <person name="Gendler K."/>
            <person name="Goodstein D."/>
            <person name="Gribskov M."/>
            <person name="Grimwood J."/>
            <person name="Groover A."/>
            <person name="Gunter L."/>
            <person name="Hamberger B."/>
            <person name="Heinze B."/>
            <person name="Helariutta Y."/>
            <person name="Henrissat B."/>
            <person name="Holligan D."/>
            <person name="Holt R."/>
            <person name="Huang W."/>
            <person name="Islam-Faridi N."/>
            <person name="Jones S."/>
            <person name="Jones-Rhoades M."/>
            <person name="Jorgensen R."/>
            <person name="Joshi C."/>
            <person name="Kangasjaervi J."/>
            <person name="Karlsson J."/>
            <person name="Kelleher C."/>
            <person name="Kirkpatrick R."/>
            <person name="Kirst M."/>
            <person name="Kohler A."/>
            <person name="Kalluri U."/>
            <person name="Larimer F."/>
            <person name="Leebens-Mack J."/>
            <person name="Leple J.-C."/>
            <person name="Locascio P."/>
            <person name="Lou Y."/>
            <person name="Lucas S."/>
            <person name="Martin F."/>
            <person name="Montanini B."/>
            <person name="Napoli C."/>
            <person name="Nelson D.R."/>
            <person name="Nelson C."/>
            <person name="Nieminen K."/>
            <person name="Nilsson O."/>
            <person name="Pereda V."/>
            <person name="Peter G."/>
            <person name="Philippe R."/>
            <person name="Pilate G."/>
            <person name="Poliakov A."/>
            <person name="Razumovskaya J."/>
            <person name="Richardson P."/>
            <person name="Rinaldi C."/>
            <person name="Ritland K."/>
            <person name="Rouze P."/>
            <person name="Ryaboy D."/>
            <person name="Schmutz J."/>
            <person name="Schrader J."/>
            <person name="Segerman B."/>
            <person name="Shin H."/>
            <person name="Siddiqui A."/>
            <person name="Sterky F."/>
            <person name="Terry A."/>
            <person name="Tsai C.-J."/>
            <person name="Uberbacher E."/>
            <person name="Unneberg P."/>
            <person name="Vahala J."/>
            <person name="Wall K."/>
            <person name="Wessler S."/>
            <person name="Yang G."/>
            <person name="Yin T."/>
            <person name="Douglas C."/>
            <person name="Marra M."/>
            <person name="Sandberg G."/>
            <person name="Van de Peer Y."/>
            <person name="Rokhsar D.S."/>
        </authorList>
    </citation>
    <scope>NUCLEOTIDE SEQUENCE [LARGE SCALE GENOMIC DNA]</scope>
    <source>
        <strain>cv. Nisqually</strain>
    </source>
</reference>
<reference key="2">
    <citation type="journal article" date="2008" name="BMC Genomics">
        <title>Analysis of 4,664 high-quality sequence-finished poplar full-length cDNA clones and their utility for the discovery of genes responding to insect feeding.</title>
        <authorList>
            <person name="Ralph S.G."/>
            <person name="Chun H.J."/>
            <person name="Cooper D."/>
            <person name="Kirkpatrick R."/>
            <person name="Kolosova N."/>
            <person name="Gunter L."/>
            <person name="Tuskan G.A."/>
            <person name="Douglas C.J."/>
            <person name="Holt R.A."/>
            <person name="Jones S.J."/>
            <person name="Marra M.A."/>
            <person name="Bohlmann J."/>
        </authorList>
    </citation>
    <scope>NUCLEOTIDE SEQUENCE [LARGE SCALE MRNA]</scope>
    <source>
        <tissue>Leaf</tissue>
    </source>
</reference>
<reference key="3">
    <citation type="journal article" date="1999" name="J. Biol. Chem.">
        <title>Evolution of plant defense mechanisms. Relationships of phenylcoumaran benzylic ether reductases to pinoresinol-lariciresinol and isoflavone reductases.</title>
        <authorList>
            <person name="Gang D.R."/>
            <person name="Kasahara H."/>
            <person name="Xia Z.Q."/>
            <person name="Vander Mijnsbrugge K."/>
            <person name="Bauw G."/>
            <person name="Boerjan W."/>
            <person name="Van Montagu M."/>
            <person name="Davin L.B."/>
            <person name="Lewis N.G."/>
        </authorList>
    </citation>
    <scope>FUNCTION</scope>
    <scope>CATALYTIC ACTIVITY</scope>
</reference>
<name>PCBER_POPTR</name>
<keyword id="KW-0521">NADP</keyword>
<keyword id="KW-0560">Oxidoreductase</keyword>
<keyword id="KW-1185">Reference proteome</keyword>
<sequence length="306" mass="33752">MASKILFIGGTGYIGKFIVEASAKAGHPTFVLVRESTLSNPAKSVVIYNFKNLGVNFLIGDLFDHESLVKAIKQVDVVISTVGHAQLVEQDRIIAAIKEAGNVKRFFPSEFGNDVDRVNAVEPAKSAFATKANVRRAIEAEGIPYTYVSSNFFSGYFLLSFNQPGATAPPRDKVVILGDGNPKAVFNKEDDIATYTIKAVDDPRTLNKILYIKPPANTISFNDLVSLWEKKIGKTLERIYVPEEQLLKNIQEASVPVNVVLSIGHSVFVKGDHTNFEIEPSFGVEASELYPDVKYTTVDEYLKQFV</sequence>